<protein>
    <recommendedName>
        <fullName evidence="1">Small ribosomal subunit protein uS3</fullName>
    </recommendedName>
    <alternativeName>
        <fullName evidence="3">30S ribosomal protein S3</fullName>
    </alternativeName>
</protein>
<sequence>MADEHQFIHDGLQRTQIDEFFSEELSRAGYGGMEVAKTPMGTQIVLKAEKPGMVIGKGGKNIRKITTTLEEEFGLEDPQVDVQEVDEPDLNAQIVADRLANALERGWYFRKAGHTTIDRIMESGALGAEIILSGKVTGARSRVEKFNRGYIKHNGEPAESIVDSGVGTAVMKLGTIGVQVKIIPPEAELPDDFEVYEDIEVEDFVEEPEGDVEELLEAPEDAEAESVGADPEEVIEEETEAEAVEEVAEEEIIDEEGVEAETGDAPTSPPDAAEEPDEALDEDVEAEAEELLDEMEDETTDEEET</sequence>
<organism>
    <name type="scientific">Natronomonas pharaonis (strain ATCC 35678 / DSM 2160 / CIP 103997 / JCM 8858 / NBRC 14720 / NCIMB 2260 / Gabara)</name>
    <name type="common">Halobacterium pharaonis</name>
    <dbReference type="NCBI Taxonomy" id="348780"/>
    <lineage>
        <taxon>Archaea</taxon>
        <taxon>Methanobacteriati</taxon>
        <taxon>Methanobacteriota</taxon>
        <taxon>Stenosarchaea group</taxon>
        <taxon>Halobacteria</taxon>
        <taxon>Halobacteriales</taxon>
        <taxon>Haloarculaceae</taxon>
        <taxon>Natronomonas</taxon>
    </lineage>
</organism>
<evidence type="ECO:0000255" key="1">
    <source>
        <dbReference type="HAMAP-Rule" id="MF_01309"/>
    </source>
</evidence>
<evidence type="ECO:0000256" key="2">
    <source>
        <dbReference type="SAM" id="MobiDB-lite"/>
    </source>
</evidence>
<evidence type="ECO:0000305" key="3"/>
<accession>Q3IMY2</accession>
<proteinExistence type="inferred from homology"/>
<reference key="1">
    <citation type="journal article" date="2005" name="Genome Res.">
        <title>Living with two extremes: conclusions from the genome sequence of Natronomonas pharaonis.</title>
        <authorList>
            <person name="Falb M."/>
            <person name="Pfeiffer F."/>
            <person name="Palm P."/>
            <person name="Rodewald K."/>
            <person name="Hickmann V."/>
            <person name="Tittor J."/>
            <person name="Oesterhelt D."/>
        </authorList>
    </citation>
    <scope>NUCLEOTIDE SEQUENCE [LARGE SCALE GENOMIC DNA]</scope>
    <source>
        <strain>ATCC 35678 / DSM 2160 / CIP 103997 / JCM 8858 / NBRC 14720 / NCIMB 2260 / Gabara</strain>
    </source>
</reference>
<feature type="chain" id="PRO_0000230746" description="Small ribosomal subunit protein uS3">
    <location>
        <begin position="1"/>
        <end position="305"/>
    </location>
</feature>
<feature type="domain" description="KH type-2" evidence="1">
    <location>
        <begin position="17"/>
        <end position="86"/>
    </location>
</feature>
<feature type="region of interest" description="Disordered" evidence="2">
    <location>
        <begin position="207"/>
        <end position="305"/>
    </location>
</feature>
<feature type="compositionally biased region" description="Acidic residues" evidence="2">
    <location>
        <begin position="207"/>
        <end position="262"/>
    </location>
</feature>
<feature type="compositionally biased region" description="Acidic residues" evidence="2">
    <location>
        <begin position="272"/>
        <end position="305"/>
    </location>
</feature>
<dbReference type="EMBL" id="CR936257">
    <property type="protein sequence ID" value="CAI50524.1"/>
    <property type="molecule type" value="Genomic_DNA"/>
</dbReference>
<dbReference type="RefSeq" id="WP_011324136.1">
    <property type="nucleotide sequence ID" value="NC_007426.1"/>
</dbReference>
<dbReference type="SMR" id="Q3IMY2"/>
<dbReference type="STRING" id="348780.NP_4866A"/>
<dbReference type="EnsemblBacteria" id="CAI50524">
    <property type="protein sequence ID" value="CAI50524"/>
    <property type="gene ID" value="NP_4866A"/>
</dbReference>
<dbReference type="GeneID" id="3703180"/>
<dbReference type="KEGG" id="nph:NP_4866A"/>
<dbReference type="eggNOG" id="arCOG04097">
    <property type="taxonomic scope" value="Archaea"/>
</dbReference>
<dbReference type="HOGENOM" id="CLU_058591_1_0_2"/>
<dbReference type="OrthoDB" id="9126at2157"/>
<dbReference type="Proteomes" id="UP000002698">
    <property type="component" value="Chromosome"/>
</dbReference>
<dbReference type="GO" id="GO:0022627">
    <property type="term" value="C:cytosolic small ribosomal subunit"/>
    <property type="evidence" value="ECO:0007669"/>
    <property type="project" value="TreeGrafter"/>
</dbReference>
<dbReference type="GO" id="GO:0019843">
    <property type="term" value="F:rRNA binding"/>
    <property type="evidence" value="ECO:0007669"/>
    <property type="project" value="UniProtKB-UniRule"/>
</dbReference>
<dbReference type="GO" id="GO:0003735">
    <property type="term" value="F:structural constituent of ribosome"/>
    <property type="evidence" value="ECO:0007669"/>
    <property type="project" value="InterPro"/>
</dbReference>
<dbReference type="GO" id="GO:0006412">
    <property type="term" value="P:translation"/>
    <property type="evidence" value="ECO:0007669"/>
    <property type="project" value="UniProtKB-UniRule"/>
</dbReference>
<dbReference type="CDD" id="cd02411">
    <property type="entry name" value="KH-II_30S_S3_arch"/>
    <property type="match status" value="1"/>
</dbReference>
<dbReference type="FunFam" id="3.30.300.20:FF:000001">
    <property type="entry name" value="30S ribosomal protein S3"/>
    <property type="match status" value="1"/>
</dbReference>
<dbReference type="Gene3D" id="3.30.300.20">
    <property type="match status" value="1"/>
</dbReference>
<dbReference type="Gene3D" id="3.30.1140.32">
    <property type="entry name" value="Ribosomal protein S3, C-terminal domain"/>
    <property type="match status" value="1"/>
</dbReference>
<dbReference type="HAMAP" id="MF_01309_A">
    <property type="entry name" value="Ribosomal_uS3_A"/>
    <property type="match status" value="1"/>
</dbReference>
<dbReference type="InterPro" id="IPR004087">
    <property type="entry name" value="KH_dom"/>
</dbReference>
<dbReference type="InterPro" id="IPR015946">
    <property type="entry name" value="KH_dom-like_a/b"/>
</dbReference>
<dbReference type="InterPro" id="IPR004044">
    <property type="entry name" value="KH_dom_type_2"/>
</dbReference>
<dbReference type="InterPro" id="IPR009019">
    <property type="entry name" value="KH_sf_prok-type"/>
</dbReference>
<dbReference type="InterPro" id="IPR036419">
    <property type="entry name" value="Ribosomal_S3_C_sf"/>
</dbReference>
<dbReference type="InterPro" id="IPR027488">
    <property type="entry name" value="Ribosomal_uS3_arc"/>
</dbReference>
<dbReference type="InterPro" id="IPR001351">
    <property type="entry name" value="Ribosomal_uS3_C"/>
</dbReference>
<dbReference type="InterPro" id="IPR018280">
    <property type="entry name" value="Ribosomal_uS3_CS"/>
</dbReference>
<dbReference type="InterPro" id="IPR005703">
    <property type="entry name" value="Ribosomal_uS3_euk/arc"/>
</dbReference>
<dbReference type="NCBIfam" id="NF003219">
    <property type="entry name" value="PRK04191.1"/>
    <property type="match status" value="1"/>
</dbReference>
<dbReference type="NCBIfam" id="TIGR01008">
    <property type="entry name" value="uS3_euk_arch"/>
    <property type="match status" value="1"/>
</dbReference>
<dbReference type="PANTHER" id="PTHR11760">
    <property type="entry name" value="30S/40S RIBOSOMAL PROTEIN S3"/>
    <property type="match status" value="1"/>
</dbReference>
<dbReference type="PANTHER" id="PTHR11760:SF32">
    <property type="entry name" value="SMALL RIBOSOMAL SUBUNIT PROTEIN US3"/>
    <property type="match status" value="1"/>
</dbReference>
<dbReference type="Pfam" id="PF07650">
    <property type="entry name" value="KH_2"/>
    <property type="match status" value="1"/>
</dbReference>
<dbReference type="Pfam" id="PF00189">
    <property type="entry name" value="Ribosomal_S3_C"/>
    <property type="match status" value="1"/>
</dbReference>
<dbReference type="SMART" id="SM00322">
    <property type="entry name" value="KH"/>
    <property type="match status" value="1"/>
</dbReference>
<dbReference type="SUPFAM" id="SSF54814">
    <property type="entry name" value="Prokaryotic type KH domain (KH-domain type II)"/>
    <property type="match status" value="1"/>
</dbReference>
<dbReference type="SUPFAM" id="SSF54821">
    <property type="entry name" value="Ribosomal protein S3 C-terminal domain"/>
    <property type="match status" value="1"/>
</dbReference>
<dbReference type="PROSITE" id="PS50823">
    <property type="entry name" value="KH_TYPE_2"/>
    <property type="match status" value="1"/>
</dbReference>
<dbReference type="PROSITE" id="PS00548">
    <property type="entry name" value="RIBOSOMAL_S3"/>
    <property type="match status" value="1"/>
</dbReference>
<name>RS3_NATPD</name>
<keyword id="KW-1185">Reference proteome</keyword>
<keyword id="KW-0687">Ribonucleoprotein</keyword>
<keyword id="KW-0689">Ribosomal protein</keyword>
<keyword id="KW-0694">RNA-binding</keyword>
<keyword id="KW-0699">rRNA-binding</keyword>
<gene>
    <name evidence="1" type="primary">rps3</name>
    <name type="ordered locus">NP_4866A</name>
</gene>
<comment type="function">
    <text evidence="1">Binds the lower part of the 30S subunit head.</text>
</comment>
<comment type="subunit">
    <text evidence="1">Part of the 30S ribosomal subunit.</text>
</comment>
<comment type="similarity">
    <text evidence="1">Belongs to the universal ribosomal protein uS3 family.</text>
</comment>